<protein>
    <recommendedName>
        <fullName evidence="1">Phosphoribosylformylglycinamidine cyclo-ligase</fullName>
        <ecNumber evidence="1">6.3.3.1</ecNumber>
    </recommendedName>
    <alternativeName>
        <fullName evidence="1">AIR synthase</fullName>
    </alternativeName>
    <alternativeName>
        <fullName evidence="1">AIRS</fullName>
    </alternativeName>
    <alternativeName>
        <fullName evidence="1">Phosphoribosyl-aminoimidazole synthetase</fullName>
    </alternativeName>
</protein>
<accession>B9M1P4</accession>
<comment type="catalytic activity">
    <reaction evidence="1">
        <text>2-formamido-N(1)-(5-O-phospho-beta-D-ribosyl)acetamidine + ATP = 5-amino-1-(5-phospho-beta-D-ribosyl)imidazole + ADP + phosphate + H(+)</text>
        <dbReference type="Rhea" id="RHEA:23032"/>
        <dbReference type="ChEBI" id="CHEBI:15378"/>
        <dbReference type="ChEBI" id="CHEBI:30616"/>
        <dbReference type="ChEBI" id="CHEBI:43474"/>
        <dbReference type="ChEBI" id="CHEBI:137981"/>
        <dbReference type="ChEBI" id="CHEBI:147287"/>
        <dbReference type="ChEBI" id="CHEBI:456216"/>
        <dbReference type="EC" id="6.3.3.1"/>
    </reaction>
</comment>
<comment type="pathway">
    <text evidence="1">Purine metabolism; IMP biosynthesis via de novo pathway; 5-amino-1-(5-phospho-D-ribosyl)imidazole from N(2)-formyl-N(1)-(5-phospho-D-ribosyl)glycinamide: step 2/2.</text>
</comment>
<comment type="subcellular location">
    <subcellularLocation>
        <location evidence="1">Cytoplasm</location>
    </subcellularLocation>
</comment>
<comment type="similarity">
    <text evidence="1">Belongs to the AIR synthase family.</text>
</comment>
<reference key="1">
    <citation type="submission" date="2009-01" db="EMBL/GenBank/DDBJ databases">
        <title>Complete sequence of Geobacter sp. FRC-32.</title>
        <authorList>
            <consortium name="US DOE Joint Genome Institute"/>
            <person name="Lucas S."/>
            <person name="Copeland A."/>
            <person name="Lapidus A."/>
            <person name="Glavina del Rio T."/>
            <person name="Dalin E."/>
            <person name="Tice H."/>
            <person name="Bruce D."/>
            <person name="Goodwin L."/>
            <person name="Pitluck S."/>
            <person name="Saunders E."/>
            <person name="Brettin T."/>
            <person name="Detter J.C."/>
            <person name="Han C."/>
            <person name="Larimer F."/>
            <person name="Land M."/>
            <person name="Hauser L."/>
            <person name="Kyrpides N."/>
            <person name="Ovchinnikova G."/>
            <person name="Kostka J."/>
            <person name="Richardson P."/>
        </authorList>
    </citation>
    <scope>NUCLEOTIDE SEQUENCE [LARGE SCALE GENOMIC DNA]</scope>
    <source>
        <strain>DSM 22248 / JCM 15807 / FRC-32</strain>
    </source>
</reference>
<evidence type="ECO:0000255" key="1">
    <source>
        <dbReference type="HAMAP-Rule" id="MF_00741"/>
    </source>
</evidence>
<gene>
    <name evidence="1" type="primary">purM</name>
    <name type="ordered locus">Geob_2777</name>
</gene>
<feature type="chain" id="PRO_1000148282" description="Phosphoribosylformylglycinamidine cyclo-ligase">
    <location>
        <begin position="1"/>
        <end position="348"/>
    </location>
</feature>
<proteinExistence type="inferred from homology"/>
<dbReference type="EC" id="6.3.3.1" evidence="1"/>
<dbReference type="EMBL" id="CP001390">
    <property type="protein sequence ID" value="ACM21126.1"/>
    <property type="molecule type" value="Genomic_DNA"/>
</dbReference>
<dbReference type="RefSeq" id="WP_012647854.1">
    <property type="nucleotide sequence ID" value="NC_011979.1"/>
</dbReference>
<dbReference type="SMR" id="B9M1P4"/>
<dbReference type="STRING" id="316067.Geob_2777"/>
<dbReference type="KEGG" id="geo:Geob_2777"/>
<dbReference type="eggNOG" id="COG0150">
    <property type="taxonomic scope" value="Bacteria"/>
</dbReference>
<dbReference type="HOGENOM" id="CLU_047116_0_0_7"/>
<dbReference type="OrthoDB" id="9777881at2"/>
<dbReference type="UniPathway" id="UPA00074">
    <property type="reaction ID" value="UER00129"/>
</dbReference>
<dbReference type="Proteomes" id="UP000007721">
    <property type="component" value="Chromosome"/>
</dbReference>
<dbReference type="GO" id="GO:0005829">
    <property type="term" value="C:cytosol"/>
    <property type="evidence" value="ECO:0007669"/>
    <property type="project" value="TreeGrafter"/>
</dbReference>
<dbReference type="GO" id="GO:0005524">
    <property type="term" value="F:ATP binding"/>
    <property type="evidence" value="ECO:0007669"/>
    <property type="project" value="UniProtKB-KW"/>
</dbReference>
<dbReference type="GO" id="GO:0004637">
    <property type="term" value="F:phosphoribosylamine-glycine ligase activity"/>
    <property type="evidence" value="ECO:0007669"/>
    <property type="project" value="TreeGrafter"/>
</dbReference>
<dbReference type="GO" id="GO:0004641">
    <property type="term" value="F:phosphoribosylformylglycinamidine cyclo-ligase activity"/>
    <property type="evidence" value="ECO:0007669"/>
    <property type="project" value="UniProtKB-UniRule"/>
</dbReference>
<dbReference type="GO" id="GO:0006189">
    <property type="term" value="P:'de novo' IMP biosynthetic process"/>
    <property type="evidence" value="ECO:0007669"/>
    <property type="project" value="UniProtKB-UniRule"/>
</dbReference>
<dbReference type="GO" id="GO:0046084">
    <property type="term" value="P:adenine biosynthetic process"/>
    <property type="evidence" value="ECO:0007669"/>
    <property type="project" value="TreeGrafter"/>
</dbReference>
<dbReference type="CDD" id="cd02196">
    <property type="entry name" value="PurM"/>
    <property type="match status" value="1"/>
</dbReference>
<dbReference type="FunFam" id="3.30.1330.10:FF:000001">
    <property type="entry name" value="Phosphoribosylformylglycinamidine cyclo-ligase"/>
    <property type="match status" value="1"/>
</dbReference>
<dbReference type="FunFam" id="3.90.650.10:FF:000001">
    <property type="entry name" value="Phosphoribosylformylglycinamidine cyclo-ligase"/>
    <property type="match status" value="1"/>
</dbReference>
<dbReference type="Gene3D" id="3.90.650.10">
    <property type="entry name" value="PurM-like C-terminal domain"/>
    <property type="match status" value="1"/>
</dbReference>
<dbReference type="Gene3D" id="3.30.1330.10">
    <property type="entry name" value="PurM-like, N-terminal domain"/>
    <property type="match status" value="1"/>
</dbReference>
<dbReference type="HAMAP" id="MF_00741">
    <property type="entry name" value="AIRS"/>
    <property type="match status" value="1"/>
</dbReference>
<dbReference type="InterPro" id="IPR010918">
    <property type="entry name" value="PurM-like_C_dom"/>
</dbReference>
<dbReference type="InterPro" id="IPR036676">
    <property type="entry name" value="PurM-like_C_sf"/>
</dbReference>
<dbReference type="InterPro" id="IPR016188">
    <property type="entry name" value="PurM-like_N"/>
</dbReference>
<dbReference type="InterPro" id="IPR036921">
    <property type="entry name" value="PurM-like_N_sf"/>
</dbReference>
<dbReference type="InterPro" id="IPR004733">
    <property type="entry name" value="PurM_cligase"/>
</dbReference>
<dbReference type="NCBIfam" id="TIGR00878">
    <property type="entry name" value="purM"/>
    <property type="match status" value="1"/>
</dbReference>
<dbReference type="PANTHER" id="PTHR10520:SF12">
    <property type="entry name" value="TRIFUNCTIONAL PURINE BIOSYNTHETIC PROTEIN ADENOSINE-3"/>
    <property type="match status" value="1"/>
</dbReference>
<dbReference type="PANTHER" id="PTHR10520">
    <property type="entry name" value="TRIFUNCTIONAL PURINE BIOSYNTHETIC PROTEIN ADENOSINE-3-RELATED"/>
    <property type="match status" value="1"/>
</dbReference>
<dbReference type="Pfam" id="PF00586">
    <property type="entry name" value="AIRS"/>
    <property type="match status" value="1"/>
</dbReference>
<dbReference type="Pfam" id="PF02769">
    <property type="entry name" value="AIRS_C"/>
    <property type="match status" value="1"/>
</dbReference>
<dbReference type="SUPFAM" id="SSF56042">
    <property type="entry name" value="PurM C-terminal domain-like"/>
    <property type="match status" value="1"/>
</dbReference>
<dbReference type="SUPFAM" id="SSF55326">
    <property type="entry name" value="PurM N-terminal domain-like"/>
    <property type="match status" value="1"/>
</dbReference>
<organism>
    <name type="scientific">Geotalea daltonii (strain DSM 22248 / JCM 15807 / FRC-32)</name>
    <name type="common">Geobacter daltonii</name>
    <dbReference type="NCBI Taxonomy" id="316067"/>
    <lineage>
        <taxon>Bacteria</taxon>
        <taxon>Pseudomonadati</taxon>
        <taxon>Thermodesulfobacteriota</taxon>
        <taxon>Desulfuromonadia</taxon>
        <taxon>Geobacterales</taxon>
        <taxon>Geobacteraceae</taxon>
        <taxon>Geotalea</taxon>
    </lineage>
</organism>
<name>PUR5_GEODF</name>
<keyword id="KW-0067">ATP-binding</keyword>
<keyword id="KW-0963">Cytoplasm</keyword>
<keyword id="KW-0436">Ligase</keyword>
<keyword id="KW-0547">Nucleotide-binding</keyword>
<keyword id="KW-0658">Purine biosynthesis</keyword>
<keyword id="KW-1185">Reference proteome</keyword>
<sequence>MSKARITYKDAGVDIDAGNTFVKLIKPLVKATSRPEVLADIGGFGGLFSLSSGKYKNPVLVSGTDGVGTKLKIAFLADRHDTIGIDLVAMCVNDIIVQGAEPLFFLDYLATAKLYPGKGAAIIKGVAEGCLQAGCALIGGETAEMPGFYAGDEYDMAGFTVGVVERDKIIDGSSITVGDKLIGLASSGLHSNGYSLARKVIMDVMGLGINDTIPGLDKSVADELLTPTRIYVKSILNLLRDFTIHGIAHITGGGLLENIPRILPNGCKAVVDKTTWQVPEIFKLIQNAGNIEEQEMFRTFNCGIGMVLSVPEKEVEEILIRLSGLNETAFVIGEIAKCDAGTECVEMV</sequence>